<gene>
    <name evidence="10" type="primary">cxcr3.2</name>
</gene>
<reference evidence="9" key="1">
    <citation type="journal article" date="2013" name="Nature">
        <title>The zebrafish reference genome sequence and its relationship to the human genome.</title>
        <authorList>
            <person name="Howe K."/>
            <person name="Clark M.D."/>
            <person name="Torroja C.F."/>
            <person name="Torrance J."/>
            <person name="Berthelot C."/>
            <person name="Muffato M."/>
            <person name="Collins J.E."/>
            <person name="Humphray S."/>
            <person name="McLaren K."/>
            <person name="Matthews L."/>
            <person name="McLaren S."/>
            <person name="Sealy I."/>
            <person name="Caccamo M."/>
            <person name="Churcher C."/>
            <person name="Scott C."/>
            <person name="Barrett J.C."/>
            <person name="Koch R."/>
            <person name="Rauch G.J."/>
            <person name="White S."/>
            <person name="Chow W."/>
            <person name="Kilian B."/>
            <person name="Quintais L.T."/>
            <person name="Guerra-Assuncao J.A."/>
            <person name="Zhou Y."/>
            <person name="Gu Y."/>
            <person name="Yen J."/>
            <person name="Vogel J.H."/>
            <person name="Eyre T."/>
            <person name="Redmond S."/>
            <person name="Banerjee R."/>
            <person name="Chi J."/>
            <person name="Fu B."/>
            <person name="Langley E."/>
            <person name="Maguire S.F."/>
            <person name="Laird G.K."/>
            <person name="Lloyd D."/>
            <person name="Kenyon E."/>
            <person name="Donaldson S."/>
            <person name="Sehra H."/>
            <person name="Almeida-King J."/>
            <person name="Loveland J."/>
            <person name="Trevanion S."/>
            <person name="Jones M."/>
            <person name="Quail M."/>
            <person name="Willey D."/>
            <person name="Hunt A."/>
            <person name="Burton J."/>
            <person name="Sims S."/>
            <person name="McLay K."/>
            <person name="Plumb B."/>
            <person name="Davis J."/>
            <person name="Clee C."/>
            <person name="Oliver K."/>
            <person name="Clark R."/>
            <person name="Riddle C."/>
            <person name="Elliot D."/>
            <person name="Threadgold G."/>
            <person name="Harden G."/>
            <person name="Ware D."/>
            <person name="Begum S."/>
            <person name="Mortimore B."/>
            <person name="Kerry G."/>
            <person name="Heath P."/>
            <person name="Phillimore B."/>
            <person name="Tracey A."/>
            <person name="Corby N."/>
            <person name="Dunn M."/>
            <person name="Johnson C."/>
            <person name="Wood J."/>
            <person name="Clark S."/>
            <person name="Pelan S."/>
            <person name="Griffiths G."/>
            <person name="Smith M."/>
            <person name="Glithero R."/>
            <person name="Howden P."/>
            <person name="Barker N."/>
            <person name="Lloyd C."/>
            <person name="Stevens C."/>
            <person name="Harley J."/>
            <person name="Holt K."/>
            <person name="Panagiotidis G."/>
            <person name="Lovell J."/>
            <person name="Beasley H."/>
            <person name="Henderson C."/>
            <person name="Gordon D."/>
            <person name="Auger K."/>
            <person name="Wright D."/>
            <person name="Collins J."/>
            <person name="Raisen C."/>
            <person name="Dyer L."/>
            <person name="Leung K."/>
            <person name="Robertson L."/>
            <person name="Ambridge K."/>
            <person name="Leongamornlert D."/>
            <person name="McGuire S."/>
            <person name="Gilderthorp R."/>
            <person name="Griffiths C."/>
            <person name="Manthravadi D."/>
            <person name="Nichol S."/>
            <person name="Barker G."/>
            <person name="Whitehead S."/>
            <person name="Kay M."/>
            <person name="Brown J."/>
            <person name="Murnane C."/>
            <person name="Gray E."/>
            <person name="Humphries M."/>
            <person name="Sycamore N."/>
            <person name="Barker D."/>
            <person name="Saunders D."/>
            <person name="Wallis J."/>
            <person name="Babbage A."/>
            <person name="Hammond S."/>
            <person name="Mashreghi-Mohammadi M."/>
            <person name="Barr L."/>
            <person name="Martin S."/>
            <person name="Wray P."/>
            <person name="Ellington A."/>
            <person name="Matthews N."/>
            <person name="Ellwood M."/>
            <person name="Woodmansey R."/>
            <person name="Clark G."/>
            <person name="Cooper J."/>
            <person name="Tromans A."/>
            <person name="Grafham D."/>
            <person name="Skuce C."/>
            <person name="Pandian R."/>
            <person name="Andrews R."/>
            <person name="Harrison E."/>
            <person name="Kimberley A."/>
            <person name="Garnett J."/>
            <person name="Fosker N."/>
            <person name="Hall R."/>
            <person name="Garner P."/>
            <person name="Kelly D."/>
            <person name="Bird C."/>
            <person name="Palmer S."/>
            <person name="Gehring I."/>
            <person name="Berger A."/>
            <person name="Dooley C.M."/>
            <person name="Ersan-Urun Z."/>
            <person name="Eser C."/>
            <person name="Geiger H."/>
            <person name="Geisler M."/>
            <person name="Karotki L."/>
            <person name="Kirn A."/>
            <person name="Konantz J."/>
            <person name="Konantz M."/>
            <person name="Oberlander M."/>
            <person name="Rudolph-Geiger S."/>
            <person name="Teucke M."/>
            <person name="Lanz C."/>
            <person name="Raddatz G."/>
            <person name="Osoegawa K."/>
            <person name="Zhu B."/>
            <person name="Rapp A."/>
            <person name="Widaa S."/>
            <person name="Langford C."/>
            <person name="Yang F."/>
            <person name="Schuster S.C."/>
            <person name="Carter N.P."/>
            <person name="Harrow J."/>
            <person name="Ning Z."/>
            <person name="Herrero J."/>
            <person name="Searle S.M."/>
            <person name="Enright A."/>
            <person name="Geisler R."/>
            <person name="Plasterk R.H."/>
            <person name="Lee C."/>
            <person name="Westerfield M."/>
            <person name="de Jong P.J."/>
            <person name="Zon L.I."/>
            <person name="Postlethwait J.H."/>
            <person name="Nusslein-Volhard C."/>
            <person name="Hubbard T.J."/>
            <person name="Roest Crollius H."/>
            <person name="Rogers J."/>
            <person name="Stemple D.L."/>
        </authorList>
    </citation>
    <scope>NUCLEOTIDE SEQUENCE [LARGE SCALE GENOMIC DNA]</scope>
    <source>
        <strain evidence="9">Tuebingen</strain>
    </source>
</reference>
<reference evidence="8" key="2">
    <citation type="submission" date="2004-11" db="EMBL/GenBank/DDBJ databases">
        <authorList>
            <consortium name="NIH - Zebrafish Gene Collection (ZGC) project"/>
        </authorList>
    </citation>
    <scope>NUCLEOTIDE SEQUENCE [LARGE SCALE MRNA]</scope>
</reference>
<reference evidence="6" key="3">
    <citation type="journal article" date="2010" name="Blood">
        <title>Macrophage-specific gene functions in Spi1-directed innate immunity.</title>
        <authorList>
            <person name="Zakrzewska A."/>
            <person name="Cui C."/>
            <person name="Stockhammer O.W."/>
            <person name="Benard E.L."/>
            <person name="Spaink H.P."/>
            <person name="Meijer A.H."/>
        </authorList>
    </citation>
    <scope>FUNCTION</scope>
    <scope>DEVELOPMENTAL STAGE</scope>
    <scope>DISRUPTION PHENOTYPE</scope>
</reference>
<reference evidence="6" key="4">
    <citation type="journal article" date="2015" name="Dis. Model. Mech.">
        <title>The CXCR3-CXCL11 signaling axis mediates macrophage recruitment and dissemination of mycobacterial infection.</title>
        <authorList>
            <person name="Torraca V."/>
            <person name="Cui C."/>
            <person name="Boland R."/>
            <person name="Bebelman J.P."/>
            <person name="van der Sar A.M."/>
            <person name="Smit M.J."/>
            <person name="Siderius M."/>
            <person name="Spaink H.P."/>
            <person name="Meijer A.H."/>
        </authorList>
    </citation>
    <scope>FUNCTION</scope>
    <scope>SUBCELLULAR LOCATION</scope>
    <scope>DEVELOPMENTAL STAGE</scope>
    <scope>DISRUPTION PHENOTYPE</scope>
</reference>
<proteinExistence type="evidence at transcript level"/>
<sequence>MDNSTTAAEVSAPTDYDYNSTSYDDDNPYAAPCSLTETWNFLGRFAPVAYILVFILALVGNILVLCVIRRYRQSRHSPCSFSLTDTFLLHLAVSDLLLAATLPFFAVEWISEWVFGKVMCKITGALFSLNVYCGVLFLACISFDRYLAIVHAINISWRRKTCHAQLACAFIWVICLGLSMVDMHFRDLVEIPGMNRMVCQIVYSEQYSKQWQIGMQLVSMVLGFILPLLVMLYCYLHIFKALCHATRRQKRRSLRLIISLVIVFVISWAPYNALRMTDSLQMLGVIVKSCALNNVLDVGILVTESLGLAHCALNPLLYGLVGVKFRRELAQMCKAALGPQGCLGLVGWANGRGSSTRRPTGSFSSVETENTSYFSVMA</sequence>
<feature type="chain" id="PRO_0000437521" description="C-X-C chemokine receptor type 3-2">
    <location>
        <begin position="1"/>
        <end position="378"/>
    </location>
</feature>
<feature type="topological domain" description="Extracellular" evidence="6">
    <location>
        <begin position="1"/>
        <end position="47"/>
    </location>
</feature>
<feature type="transmembrane region" description="Helical; Name=1" evidence="1">
    <location>
        <begin position="48"/>
        <end position="68"/>
    </location>
</feature>
<feature type="topological domain" description="Cytoplasmic" evidence="6">
    <location>
        <begin position="69"/>
        <end position="86"/>
    </location>
</feature>
<feature type="transmembrane region" description="Helical; Name=2" evidence="1">
    <location>
        <begin position="87"/>
        <end position="107"/>
    </location>
</feature>
<feature type="topological domain" description="Extracellular" evidence="6">
    <location>
        <begin position="108"/>
        <end position="121"/>
    </location>
</feature>
<feature type="transmembrane region" description="Helical; Name=3" evidence="1">
    <location>
        <begin position="122"/>
        <end position="142"/>
    </location>
</feature>
<feature type="topological domain" description="Cytoplasmic" evidence="6">
    <location>
        <begin position="143"/>
        <end position="164"/>
    </location>
</feature>
<feature type="transmembrane region" description="Helical; Name=4" evidence="1">
    <location>
        <begin position="165"/>
        <end position="185"/>
    </location>
</feature>
<feature type="topological domain" description="Extracellular" evidence="6">
    <location>
        <begin position="186"/>
        <end position="212"/>
    </location>
</feature>
<feature type="transmembrane region" description="Helical; Name=5" evidence="1">
    <location>
        <begin position="213"/>
        <end position="233"/>
    </location>
</feature>
<feature type="topological domain" description="Cytoplasmic" evidence="6">
    <location>
        <begin position="234"/>
        <end position="253"/>
    </location>
</feature>
<feature type="transmembrane region" description="Helical; Name=6" evidence="1">
    <location>
        <begin position="254"/>
        <end position="274"/>
    </location>
</feature>
<feature type="topological domain" description="Extracellular" evidence="6">
    <location>
        <begin position="275"/>
        <end position="304"/>
    </location>
</feature>
<feature type="transmembrane region" description="Helical; Name=7" evidence="1">
    <location>
        <begin position="305"/>
        <end position="325"/>
    </location>
</feature>
<feature type="topological domain" description="Cytoplasmic" evidence="6">
    <location>
        <begin position="326"/>
        <end position="378"/>
    </location>
</feature>
<feature type="glycosylation site" description="N-linked (GlcNAc...) asparagine" evidence="2">
    <location>
        <position position="3"/>
    </location>
</feature>
<feature type="glycosylation site" description="N-linked (GlcNAc...) asparagine" evidence="2">
    <location>
        <position position="19"/>
    </location>
</feature>
<feature type="disulfide bond" evidence="3">
    <location>
        <begin position="120"/>
        <end position="199"/>
    </location>
</feature>
<feature type="sequence conflict" description="In Ref. 2; AAH85659." evidence="6" ref="2">
    <original>A</original>
    <variation>T</variation>
    <location>
        <position position="8"/>
    </location>
</feature>
<feature type="sequence conflict" description="In Ref. 2; AAH85659." evidence="6" ref="2">
    <original>NST</original>
    <variation>SSA</variation>
    <location>
        <begin position="19"/>
        <end position="21"/>
    </location>
</feature>
<feature type="sequence conflict" description="In Ref. 2; AAH85659." evidence="6" ref="2">
    <original>Y</original>
    <variation>N</variation>
    <location>
        <position position="29"/>
    </location>
</feature>
<feature type="sequence conflict" description="In Ref. 2; AAH85659." evidence="6" ref="2">
    <original>T</original>
    <variation>R</variation>
    <location>
        <position position="36"/>
    </location>
</feature>
<feature type="sequence conflict" description="In Ref. 2; AAH85659." evidence="6" ref="2">
    <original>L</original>
    <variation>M</variation>
    <location>
        <position position="52"/>
    </location>
</feature>
<feature type="sequence conflict" description="In Ref. 1; CAQ13805." evidence="6" ref="1">
    <original>V</original>
    <variation>I</variation>
    <location>
        <position position="93"/>
    </location>
</feature>
<feature type="sequence conflict" description="In Ref. 2; AAH85659." evidence="6" ref="2">
    <original>E</original>
    <variation>Q</variation>
    <location>
        <position position="190"/>
    </location>
</feature>
<dbReference type="EMBL" id="BX005342">
    <property type="protein sequence ID" value="CAQ13805.1"/>
    <property type="molecule type" value="Genomic_DNA"/>
</dbReference>
<dbReference type="EMBL" id="CR848719">
    <property type="status" value="NOT_ANNOTATED_CDS"/>
    <property type="molecule type" value="Genomic_DNA"/>
</dbReference>
<dbReference type="EMBL" id="BC085659">
    <property type="protein sequence ID" value="AAH85659.1"/>
    <property type="molecule type" value="mRNA"/>
</dbReference>
<dbReference type="RefSeq" id="NP_001007315.1">
    <property type="nucleotide sequence ID" value="NM_001007314.1"/>
</dbReference>
<dbReference type="SMR" id="E9QJ73"/>
<dbReference type="FunCoup" id="E9QJ73">
    <property type="interactions" value="52"/>
</dbReference>
<dbReference type="STRING" id="7955.ENSDARP00000122984"/>
<dbReference type="GlyCosmos" id="E9QJ73">
    <property type="glycosylation" value="2 sites, No reported glycans"/>
</dbReference>
<dbReference type="PaxDb" id="7955-ENSDARP00000122984"/>
<dbReference type="Ensembl" id="ENSDART00000145727">
    <property type="protein sequence ID" value="ENSDARP00000122984"/>
    <property type="gene ID" value="ENSDARG00000041041"/>
</dbReference>
<dbReference type="GeneID" id="791973"/>
<dbReference type="KEGG" id="dre:791973"/>
<dbReference type="AGR" id="ZFIN:ZDB-GENE-041114-186"/>
<dbReference type="CTD" id="791973"/>
<dbReference type="ZFIN" id="ZDB-GENE-041114-186">
    <property type="gene designation" value="cxcr3.2"/>
</dbReference>
<dbReference type="eggNOG" id="KOG3656">
    <property type="taxonomic scope" value="Eukaryota"/>
</dbReference>
<dbReference type="HOGENOM" id="CLU_1264104_0_0_1"/>
<dbReference type="InParanoid" id="E9QJ73"/>
<dbReference type="OMA" id="WRFADHY"/>
<dbReference type="OrthoDB" id="8576531at2759"/>
<dbReference type="PhylomeDB" id="E9QJ73"/>
<dbReference type="PRO" id="PR:E9QJ73"/>
<dbReference type="Proteomes" id="UP000000437">
    <property type="component" value="Alternate scaffold 16"/>
</dbReference>
<dbReference type="Proteomes" id="UP000000437">
    <property type="component" value="Chromosome 16"/>
</dbReference>
<dbReference type="Bgee" id="ENSDARG00000041041">
    <property type="expression patterns" value="Expressed in granulocyte and 16 other cell types or tissues"/>
</dbReference>
<dbReference type="GO" id="GO:0009897">
    <property type="term" value="C:external side of plasma membrane"/>
    <property type="evidence" value="ECO:0000318"/>
    <property type="project" value="GO_Central"/>
</dbReference>
<dbReference type="GO" id="GO:0019957">
    <property type="term" value="F:C-C chemokine binding"/>
    <property type="evidence" value="ECO:0000318"/>
    <property type="project" value="GO_Central"/>
</dbReference>
<dbReference type="GO" id="GO:0016493">
    <property type="term" value="F:C-C chemokine receptor activity"/>
    <property type="evidence" value="ECO:0000318"/>
    <property type="project" value="GO_Central"/>
</dbReference>
<dbReference type="GO" id="GO:0019722">
    <property type="term" value="P:calcium-mediated signaling"/>
    <property type="evidence" value="ECO:0000318"/>
    <property type="project" value="GO_Central"/>
</dbReference>
<dbReference type="GO" id="GO:0060326">
    <property type="term" value="P:cell chemotaxis"/>
    <property type="evidence" value="ECO:0000318"/>
    <property type="project" value="GO_Central"/>
</dbReference>
<dbReference type="GO" id="GO:0070098">
    <property type="term" value="P:chemokine-mediated signaling pathway"/>
    <property type="evidence" value="ECO:0000316"/>
    <property type="project" value="ZFIN"/>
</dbReference>
<dbReference type="GO" id="GO:0006955">
    <property type="term" value="P:immune response"/>
    <property type="evidence" value="ECO:0000318"/>
    <property type="project" value="GO_Central"/>
</dbReference>
<dbReference type="GO" id="GO:0045087">
    <property type="term" value="P:innate immune response"/>
    <property type="evidence" value="ECO:0007669"/>
    <property type="project" value="UniProtKB-KW"/>
</dbReference>
<dbReference type="GO" id="GO:0002522">
    <property type="term" value="P:leukocyte migration involved in immune response"/>
    <property type="evidence" value="ECO:0000315"/>
    <property type="project" value="ZFIN"/>
</dbReference>
<dbReference type="GO" id="GO:0002281">
    <property type="term" value="P:macrophage activation involved in immune response"/>
    <property type="evidence" value="ECO:0000315"/>
    <property type="project" value="ZFIN"/>
</dbReference>
<dbReference type="GO" id="GO:0048246">
    <property type="term" value="P:macrophage chemotaxis"/>
    <property type="evidence" value="ECO:0000316"/>
    <property type="project" value="ZFIN"/>
</dbReference>
<dbReference type="GO" id="GO:0007204">
    <property type="term" value="P:positive regulation of cytosolic calcium ion concentration"/>
    <property type="evidence" value="ECO:0000318"/>
    <property type="project" value="GO_Central"/>
</dbReference>
<dbReference type="GO" id="GO:0009617">
    <property type="term" value="P:response to bacterium"/>
    <property type="evidence" value="ECO:0000315"/>
    <property type="project" value="ZFIN"/>
</dbReference>
<dbReference type="CDD" id="cd14984">
    <property type="entry name" value="7tmA_Chemokine_R"/>
    <property type="match status" value="1"/>
</dbReference>
<dbReference type="FunFam" id="1.20.1070.10:FF:000477">
    <property type="entry name" value="Chemokine (C-X-C motif) receptor 3, tandem duplicate 2"/>
    <property type="match status" value="1"/>
</dbReference>
<dbReference type="Gene3D" id="1.20.1070.10">
    <property type="entry name" value="Rhodopsin 7-helix transmembrane proteins"/>
    <property type="match status" value="1"/>
</dbReference>
<dbReference type="InterPro" id="IPR000248">
    <property type="entry name" value="ATII_rcpt"/>
</dbReference>
<dbReference type="InterPro" id="IPR050119">
    <property type="entry name" value="CCR1-9-like"/>
</dbReference>
<dbReference type="InterPro" id="IPR000276">
    <property type="entry name" value="GPCR_Rhodpsn"/>
</dbReference>
<dbReference type="InterPro" id="IPR017452">
    <property type="entry name" value="GPCR_Rhodpsn_7TM"/>
</dbReference>
<dbReference type="PANTHER" id="PTHR10489:SF947">
    <property type="entry name" value="C-X-C CHEMOKINE RECEPTOR TYPE 3-2"/>
    <property type="match status" value="1"/>
</dbReference>
<dbReference type="PANTHER" id="PTHR10489">
    <property type="entry name" value="CELL ADHESION MOLECULE"/>
    <property type="match status" value="1"/>
</dbReference>
<dbReference type="Pfam" id="PF00001">
    <property type="entry name" value="7tm_1"/>
    <property type="match status" value="1"/>
</dbReference>
<dbReference type="PRINTS" id="PR00241">
    <property type="entry name" value="ANGIOTENSINR"/>
</dbReference>
<dbReference type="PRINTS" id="PR00237">
    <property type="entry name" value="GPCRRHODOPSN"/>
</dbReference>
<dbReference type="SUPFAM" id="SSF81321">
    <property type="entry name" value="Family A G protein-coupled receptor-like"/>
    <property type="match status" value="1"/>
</dbReference>
<dbReference type="PROSITE" id="PS00237">
    <property type="entry name" value="G_PROTEIN_RECEP_F1_1"/>
    <property type="match status" value="1"/>
</dbReference>
<dbReference type="PROSITE" id="PS50262">
    <property type="entry name" value="G_PROTEIN_RECEP_F1_2"/>
    <property type="match status" value="1"/>
</dbReference>
<comment type="function">
    <text evidence="4 5">Receptor for the C-X-C chemokines cxcl11.1 and cxcl11.6 (PubMed:25573892). Promotes macrophage chemotaxis to sites of bacterial infection (PubMed:20424185, PubMed:25573892).</text>
</comment>
<comment type="subcellular location">
    <subcellularLocation>
        <location evidence="7">Cell membrane</location>
        <topology evidence="1">Multi-pass membrane protein</topology>
    </subcellularLocation>
</comment>
<comment type="developmental stage">
    <text evidence="4 5">Detected in developing macrophages at 28 hours post-fertilization (PubMed:20424185). Continues to be expressed in macrophages at 2 and 6 days post-fertilization (dpf) (PubMed:25573892). Also detected in neutrophils at 2 and 6 dpf (PubMed:25573892).</text>
</comment>
<comment type="disruption phenotype">
    <text evidence="4 5">Viable with no significant effect on survival (PubMed:25573892). Macrophage and neutrophil counts are normal (PubMed:25573892). Macrophage migration in response to cxcr3.2-independent stimuli is not affected, although the basal migration rate is reduced (PubMed:25573892). Macrophage migration to sites of bacterial infection by S.typhimurium or M.marinum is reduced (PubMed:20424185, PubMed:25573892). Dissemination of bacterial infection to distant sites and granuloma formation is also reduced (PubMed:25573892).</text>
</comment>
<comment type="similarity">
    <text evidence="3">Belongs to the G-protein coupled receptor 1 family.</text>
</comment>
<accession>E9QJ73</accession>
<accession>B0S589</accession>
<accession>Q5U387</accession>
<protein>
    <recommendedName>
        <fullName evidence="6">C-X-C chemokine receptor type 3-2</fullName>
    </recommendedName>
</protein>
<evidence type="ECO:0000255" key="1"/>
<evidence type="ECO:0000255" key="2">
    <source>
        <dbReference type="PROSITE-ProRule" id="PRU00498"/>
    </source>
</evidence>
<evidence type="ECO:0000255" key="3">
    <source>
        <dbReference type="PROSITE-ProRule" id="PRU00521"/>
    </source>
</evidence>
<evidence type="ECO:0000269" key="4">
    <source>
    </source>
</evidence>
<evidence type="ECO:0000269" key="5">
    <source>
    </source>
</evidence>
<evidence type="ECO:0000305" key="6"/>
<evidence type="ECO:0000305" key="7">
    <source>
    </source>
</evidence>
<evidence type="ECO:0000312" key="8">
    <source>
        <dbReference type="EMBL" id="AAH85659.1"/>
    </source>
</evidence>
<evidence type="ECO:0000312" key="9">
    <source>
        <dbReference type="Proteomes" id="UP000000437"/>
    </source>
</evidence>
<evidence type="ECO:0000312" key="10">
    <source>
        <dbReference type="ZFIN" id="ZDB-GENE-041114-186"/>
    </source>
</evidence>
<organism evidence="9">
    <name type="scientific">Danio rerio</name>
    <name type="common">Zebrafish</name>
    <name type="synonym">Brachydanio rerio</name>
    <dbReference type="NCBI Taxonomy" id="7955"/>
    <lineage>
        <taxon>Eukaryota</taxon>
        <taxon>Metazoa</taxon>
        <taxon>Chordata</taxon>
        <taxon>Craniata</taxon>
        <taxon>Vertebrata</taxon>
        <taxon>Euteleostomi</taxon>
        <taxon>Actinopterygii</taxon>
        <taxon>Neopterygii</taxon>
        <taxon>Teleostei</taxon>
        <taxon>Ostariophysi</taxon>
        <taxon>Cypriniformes</taxon>
        <taxon>Danionidae</taxon>
        <taxon>Danioninae</taxon>
        <taxon>Danio</taxon>
    </lineage>
</organism>
<keyword id="KW-1003">Cell membrane</keyword>
<keyword id="KW-0145">Chemotaxis</keyword>
<keyword id="KW-1015">Disulfide bond</keyword>
<keyword id="KW-0297">G-protein coupled receptor</keyword>
<keyword id="KW-0325">Glycoprotein</keyword>
<keyword id="KW-0391">Immunity</keyword>
<keyword id="KW-0399">Innate immunity</keyword>
<keyword id="KW-0472">Membrane</keyword>
<keyword id="KW-0675">Receptor</keyword>
<keyword id="KW-1185">Reference proteome</keyword>
<keyword id="KW-0807">Transducer</keyword>
<keyword id="KW-0812">Transmembrane</keyword>
<keyword id="KW-1133">Transmembrane helix</keyword>
<name>CXR32_DANRE</name>